<evidence type="ECO:0000250" key="1"/>
<evidence type="ECO:0000305" key="2"/>
<name>BAC3_HALVA</name>
<feature type="chain" id="PRO_0000196279" description="Bacterial rhodopsin CSR3">
    <location>
        <begin position="1"/>
        <end position="236"/>
    </location>
</feature>
<feature type="topological domain" description="Extracellular" evidence="1">
    <location>
        <begin position="1"/>
        <end position="3"/>
    </location>
</feature>
<feature type="transmembrane region" description="Helical; Name=Helix A" evidence="1">
    <location>
        <begin position="4"/>
        <end position="25"/>
    </location>
</feature>
<feature type="topological domain" description="Cytoplasmic" evidence="1">
    <location>
        <begin position="26"/>
        <end position="34"/>
    </location>
</feature>
<feature type="transmembrane region" description="Helical; Name=Helix B" evidence="1">
    <location>
        <begin position="35"/>
        <end position="56"/>
    </location>
</feature>
<feature type="topological domain" description="Extracellular" evidence="1">
    <location>
        <begin position="57"/>
        <end position="70"/>
    </location>
</feature>
<feature type="transmembrane region" description="Helical; Name=Helix C" evidence="1">
    <location>
        <begin position="71"/>
        <end position="92"/>
    </location>
</feature>
<feature type="topological domain" description="Cytoplasmic" evidence="1">
    <location>
        <begin position="93"/>
        <end position="95"/>
    </location>
</feature>
<feature type="transmembrane region" description="Helical; Name=Helix D" evidence="1">
    <location>
        <begin position="96"/>
        <end position="118"/>
    </location>
</feature>
<feature type="topological domain" description="Extracellular" evidence="1">
    <location>
        <begin position="119"/>
        <end position="122"/>
    </location>
</feature>
<feature type="transmembrane region" description="Helical; Name=Helix E" evidence="1">
    <location>
        <begin position="123"/>
        <end position="150"/>
    </location>
</feature>
<feature type="topological domain" description="Cytoplasmic" evidence="1">
    <location>
        <begin position="151"/>
        <end position="153"/>
    </location>
</feature>
<feature type="transmembrane region" description="Helical; Name=Helix F" evidence="1">
    <location>
        <begin position="154"/>
        <end position="181"/>
    </location>
</feature>
<feature type="topological domain" description="Extracellular" evidence="1">
    <location>
        <begin position="182"/>
        <end position="189"/>
    </location>
</feature>
<feature type="transmembrane region" description="Helical; Name=Helix G" evidence="1">
    <location>
        <begin position="190"/>
        <end position="222"/>
    </location>
</feature>
<feature type="topological domain" description="Cytoplasmic" evidence="1">
    <location>
        <begin position="223"/>
        <end position="236"/>
    </location>
</feature>
<feature type="modified residue" description="N6-(retinylidene)lysine" evidence="1">
    <location>
        <position position="205"/>
    </location>
</feature>
<reference key="1">
    <citation type="journal article" date="1996" name="Biochem. Biophys. Res. Commun.">
        <title>Novel bacterial rhodopsins from Haloarcula vallismortis.</title>
        <authorList>
            <person name="Kitajima T."/>
            <person name="Hirayama J."/>
            <person name="Ihara K."/>
            <person name="Sugiyama Y."/>
            <person name="Kamo N."/>
            <person name="Mukohata Y."/>
        </authorList>
    </citation>
    <scope>NUCLEOTIDE SEQUENCE [GENOMIC DNA]</scope>
    <source>
        <strain>ATCC 29715 / DSM 3756 / JCM 8877 / NBRC 14741 / NCIMB 2082</strain>
    </source>
</reference>
<accession>Q48334</accession>
<sequence>MDAVAVVYGITAAGFAVGVAIVGYLYASLEGSEERSILAALALIPGFAGISYVAMAFGIGTVTIGETTLVGFRYLDWVVTTPLLVGFVGYAAGASRRAIFGVMVADALMILTGVGAVVADGTLKWVLFGVSTVFHVSLFAYLYLVFPRSVPDDPQRIGLFSLLKNHIGLLWIAYPLVWLAGPEGLGLATYVGVSITYAFLDLLAKVPYVYFFYARRQVFATKLLRDSGEVTATPAD</sequence>
<protein>
    <recommendedName>
        <fullName>Bacterial rhodopsin CSR3</fullName>
    </recommendedName>
</protein>
<dbReference type="EMBL" id="D83748">
    <property type="protein sequence ID" value="BAA12098.1"/>
    <property type="molecule type" value="Genomic_DNA"/>
</dbReference>
<dbReference type="RefSeq" id="WP_004518499.1">
    <property type="nucleotide sequence ID" value="NZ_FNOF01000001.1"/>
</dbReference>
<dbReference type="SMR" id="Q48334"/>
<dbReference type="STRING" id="28442.SAMN05443574_101276"/>
<dbReference type="GO" id="GO:0005886">
    <property type="term" value="C:plasma membrane"/>
    <property type="evidence" value="ECO:0007669"/>
    <property type="project" value="UniProtKB-SubCell"/>
</dbReference>
<dbReference type="GO" id="GO:0005216">
    <property type="term" value="F:monoatomic ion channel activity"/>
    <property type="evidence" value="ECO:0007669"/>
    <property type="project" value="InterPro"/>
</dbReference>
<dbReference type="GO" id="GO:0009881">
    <property type="term" value="F:photoreceptor activity"/>
    <property type="evidence" value="ECO:0007669"/>
    <property type="project" value="UniProtKB-KW"/>
</dbReference>
<dbReference type="GO" id="GO:0007602">
    <property type="term" value="P:phototransduction"/>
    <property type="evidence" value="ECO:0007669"/>
    <property type="project" value="UniProtKB-KW"/>
</dbReference>
<dbReference type="CDD" id="cd15029">
    <property type="entry name" value="7tm_SRI_SRII"/>
    <property type="match status" value="1"/>
</dbReference>
<dbReference type="Gene3D" id="1.20.1070.10">
    <property type="entry name" value="Rhodopsin 7-helix transmembrane proteins"/>
    <property type="match status" value="1"/>
</dbReference>
<dbReference type="InterPro" id="IPR001425">
    <property type="entry name" value="Arc/bac/fun_rhodopsins"/>
</dbReference>
<dbReference type="InterPro" id="IPR018229">
    <property type="entry name" value="Rhodopsin_retinal_BS"/>
</dbReference>
<dbReference type="PANTHER" id="PTHR28286">
    <property type="match status" value="1"/>
</dbReference>
<dbReference type="PANTHER" id="PTHR28286:SF2">
    <property type="entry name" value="BACTERIORHODOPSIN _OPSIN, NOPA (EUROFUNG)"/>
    <property type="match status" value="1"/>
</dbReference>
<dbReference type="Pfam" id="PF01036">
    <property type="entry name" value="Bac_rhodopsin"/>
    <property type="match status" value="1"/>
</dbReference>
<dbReference type="PRINTS" id="PR00251">
    <property type="entry name" value="BACTRLOPSIN"/>
</dbReference>
<dbReference type="SMART" id="SM01021">
    <property type="entry name" value="Bac_rhodopsin"/>
    <property type="match status" value="1"/>
</dbReference>
<dbReference type="SUPFAM" id="SSF81321">
    <property type="entry name" value="Family A G protein-coupled receptor-like"/>
    <property type="match status" value="1"/>
</dbReference>
<dbReference type="PROSITE" id="PS00950">
    <property type="entry name" value="BACTERIAL_OPSIN_1"/>
    <property type="match status" value="1"/>
</dbReference>
<dbReference type="PROSITE" id="PS00327">
    <property type="entry name" value="BACTERIAL_OPSIN_RET"/>
    <property type="match status" value="1"/>
</dbReference>
<organism>
    <name type="scientific">Haloarcula vallismortis</name>
    <name type="common">Halobacterium vallismortis</name>
    <dbReference type="NCBI Taxonomy" id="28442"/>
    <lineage>
        <taxon>Archaea</taxon>
        <taxon>Methanobacteriati</taxon>
        <taxon>Methanobacteriota</taxon>
        <taxon>Stenosarchaea group</taxon>
        <taxon>Halobacteria</taxon>
        <taxon>Halobacteriales</taxon>
        <taxon>Haloarculaceae</taxon>
        <taxon>Haloarcula</taxon>
    </lineage>
</organism>
<keyword id="KW-1003">Cell membrane</keyword>
<keyword id="KW-0157">Chromophore</keyword>
<keyword id="KW-0472">Membrane</keyword>
<keyword id="KW-0600">Photoreceptor protein</keyword>
<keyword id="KW-0675">Receptor</keyword>
<keyword id="KW-0681">Retinal protein</keyword>
<keyword id="KW-0716">Sensory transduction</keyword>
<keyword id="KW-0812">Transmembrane</keyword>
<keyword id="KW-1133">Transmembrane helix</keyword>
<comment type="subcellular location">
    <subcellularLocation>
        <location>Cell membrane</location>
        <topology>Multi-pass membrane protein</topology>
    </subcellularLocation>
</comment>
<comment type="similarity">
    <text evidence="2">Belongs to the archaeal/bacterial/fungal opsin family.</text>
</comment>
<proteinExistence type="inferred from homology"/>